<gene>
    <name evidence="1" type="primary">alaS</name>
    <name type="ordered locus">PA0903</name>
</gene>
<evidence type="ECO:0000255" key="1">
    <source>
        <dbReference type="HAMAP-Rule" id="MF_00036"/>
    </source>
</evidence>
<organism>
    <name type="scientific">Pseudomonas aeruginosa (strain ATCC 15692 / DSM 22644 / CIP 104116 / JCM 14847 / LMG 12228 / 1C / PRS 101 / PAO1)</name>
    <dbReference type="NCBI Taxonomy" id="208964"/>
    <lineage>
        <taxon>Bacteria</taxon>
        <taxon>Pseudomonadati</taxon>
        <taxon>Pseudomonadota</taxon>
        <taxon>Gammaproteobacteria</taxon>
        <taxon>Pseudomonadales</taxon>
        <taxon>Pseudomonadaceae</taxon>
        <taxon>Pseudomonas</taxon>
    </lineage>
</organism>
<proteinExistence type="inferred from homology"/>
<accession>Q9I553</accession>
<accession>O50179</accession>
<protein>
    <recommendedName>
        <fullName evidence="1">Alanine--tRNA ligase</fullName>
        <ecNumber evidence="1">6.1.1.7</ecNumber>
    </recommendedName>
    <alternativeName>
        <fullName evidence="1">Alanyl-tRNA synthetase</fullName>
        <shortName evidence="1">AlaRS</shortName>
    </alternativeName>
</protein>
<sequence length="874" mass="94702">MKSAEIREAFLRFFEEKGHTRVASSSLIPANDPTLLFTNAGMNQFKDCFLGLEKRAYTRATTSQKCVRAGGKHNDLENVGYTARHHTFFEMLGNFSFGDYFKRDAIHYAWEFLTGEKWLNLPKEKLWVTVYATDDEAYDIWTKEVGVPAERMVRIGDNKGAPYASDNFWAMGDTGPCGPCTEIFFDHGPEIWGGPPGSPEEDGDRYIEIWNNVFMQFNRTADGVMHPLPAPSVDTGMGLERVSAVLQHVHSNYEIDLFQNLLKASAEAIGCANDDAPSLKVVADHIRSCSFLIADGVLPSNEGRGYVLRRIIRRACRHGNKLGARGTFFHKIVAALVAEMGDAFPELKQQQAHIERVLKTEEEQFAKTLEQGLKILEQDLAELQGSVIPGNVVFKLYDTYGFPVDLTNDIARERELTIDEDGFEREMEAQRERARASSAFGMDYNSLVKVDGETRFLGYQGVSGAGQIVALFRDGQAVERLEEGEEGVVVLDQTPFYAESGGQVGDSGYLEAAGVRFDVRDTTKAGGAHLHHGVVARGNLSVGGAVKAEVDASVRQATALNHSATHLLHAALRQVLGDHVQQKGSLVDSQRLRFDFSHFEAIKAEQLKALEDIVNAEIRRNTEVETEETDIDTAKAKGAMALFGEKYGDQVRVLSMGGDFSVELCGGTHVSRTGDIGLFKITSEGGVAAGVRRIEAVTGAAALAYLNGAEEQLKEAASLVKGSRDNLLDKLGALLERNRSLEKELEQLKAKAASAAGDDLSAAAVEIKGAKVLAARLDGLDGKALLALVDQLKNKLGRAVILLGGELDGKVVLVAGVTQDLTGQLKAGELMKQAAAAVGGKGGGRPDMAQGGGTDAAKLDEALALAQRFVEQGL</sequence>
<feature type="chain" id="PRO_0000075176" description="Alanine--tRNA ligase">
    <location>
        <begin position="1"/>
        <end position="874"/>
    </location>
</feature>
<feature type="binding site" evidence="1">
    <location>
        <position position="562"/>
    </location>
    <ligand>
        <name>Zn(2+)</name>
        <dbReference type="ChEBI" id="CHEBI:29105"/>
    </ligand>
</feature>
<feature type="binding site" evidence="1">
    <location>
        <position position="566"/>
    </location>
    <ligand>
        <name>Zn(2+)</name>
        <dbReference type="ChEBI" id="CHEBI:29105"/>
    </ligand>
</feature>
<feature type="binding site" evidence="1">
    <location>
        <position position="665"/>
    </location>
    <ligand>
        <name>Zn(2+)</name>
        <dbReference type="ChEBI" id="CHEBI:29105"/>
    </ligand>
</feature>
<feature type="binding site" evidence="1">
    <location>
        <position position="669"/>
    </location>
    <ligand>
        <name>Zn(2+)</name>
        <dbReference type="ChEBI" id="CHEBI:29105"/>
    </ligand>
</feature>
<name>SYA_PSEAE</name>
<reference key="1">
    <citation type="journal article" date="2000" name="Nature">
        <title>Complete genome sequence of Pseudomonas aeruginosa PAO1, an opportunistic pathogen.</title>
        <authorList>
            <person name="Stover C.K."/>
            <person name="Pham X.-Q.T."/>
            <person name="Erwin A.L."/>
            <person name="Mizoguchi S.D."/>
            <person name="Warrener P."/>
            <person name="Hickey M.J."/>
            <person name="Brinkman F.S.L."/>
            <person name="Hufnagle W.O."/>
            <person name="Kowalik D.J."/>
            <person name="Lagrou M."/>
            <person name="Garber R.L."/>
            <person name="Goltry L."/>
            <person name="Tolentino E."/>
            <person name="Westbrock-Wadman S."/>
            <person name="Yuan Y."/>
            <person name="Brody L.L."/>
            <person name="Coulter S.N."/>
            <person name="Folger K.R."/>
            <person name="Kas A."/>
            <person name="Larbig K."/>
            <person name="Lim R.M."/>
            <person name="Smith K.A."/>
            <person name="Spencer D.H."/>
            <person name="Wong G.K.-S."/>
            <person name="Wu Z."/>
            <person name="Paulsen I.T."/>
            <person name="Reizer J."/>
            <person name="Saier M.H. Jr."/>
            <person name="Hancock R.E.W."/>
            <person name="Lory S."/>
            <person name="Olson M.V."/>
        </authorList>
    </citation>
    <scope>NUCLEOTIDE SEQUENCE [LARGE SCALE GENOMIC DNA]</scope>
    <source>
        <strain>ATCC 15692 / DSM 22644 / CIP 104116 / JCM 14847 / LMG 12228 / 1C / PRS 101 / PAO1</strain>
    </source>
</reference>
<reference key="2">
    <citation type="journal article" date="1997" name="J. Bacteriol.">
        <title>Cloning and characterization of the aru genes encoding enzymes of the catabolic arginine succinyltransferase pathway in Pseudomonas aeruginosa.</title>
        <authorList>
            <person name="Itoh Y."/>
        </authorList>
    </citation>
    <scope>NUCLEOTIDE SEQUENCE [GENOMIC DNA] OF 1-183</scope>
    <source>
        <strain>ATCC 15692 / DSM 22644 / CIP 104116 / JCM 14847 / LMG 12228 / 1C / PRS 101 / PAO1</strain>
    </source>
</reference>
<comment type="function">
    <text evidence="1">Catalyzes the attachment of alanine to tRNA(Ala) in a two-step reaction: alanine is first activated by ATP to form Ala-AMP and then transferred to the acceptor end of tRNA(Ala). Also edits incorrectly charged Ser-tRNA(Ala) and Gly-tRNA(Ala) via its editing domain.</text>
</comment>
<comment type="catalytic activity">
    <reaction evidence="1">
        <text>tRNA(Ala) + L-alanine + ATP = L-alanyl-tRNA(Ala) + AMP + diphosphate</text>
        <dbReference type="Rhea" id="RHEA:12540"/>
        <dbReference type="Rhea" id="RHEA-COMP:9657"/>
        <dbReference type="Rhea" id="RHEA-COMP:9923"/>
        <dbReference type="ChEBI" id="CHEBI:30616"/>
        <dbReference type="ChEBI" id="CHEBI:33019"/>
        <dbReference type="ChEBI" id="CHEBI:57972"/>
        <dbReference type="ChEBI" id="CHEBI:78442"/>
        <dbReference type="ChEBI" id="CHEBI:78497"/>
        <dbReference type="ChEBI" id="CHEBI:456215"/>
        <dbReference type="EC" id="6.1.1.7"/>
    </reaction>
</comment>
<comment type="cofactor">
    <cofactor evidence="1">
        <name>Zn(2+)</name>
        <dbReference type="ChEBI" id="CHEBI:29105"/>
    </cofactor>
    <text evidence="1">Binds 1 zinc ion per subunit.</text>
</comment>
<comment type="subcellular location">
    <subcellularLocation>
        <location evidence="1">Cytoplasm</location>
    </subcellularLocation>
</comment>
<comment type="domain">
    <text evidence="1">Consists of three domains; the N-terminal catalytic domain, the editing domain and the C-terminal C-Ala domain. The editing domain removes incorrectly charged amino acids, while the C-Ala domain, along with tRNA(Ala), serves as a bridge to cooperatively bring together the editing and aminoacylation centers thus stimulating deacylation of misacylated tRNAs.</text>
</comment>
<comment type="similarity">
    <text evidence="1">Belongs to the class-II aminoacyl-tRNA synthetase family.</text>
</comment>
<dbReference type="EC" id="6.1.1.7" evidence="1"/>
<dbReference type="EMBL" id="AE004091">
    <property type="protein sequence ID" value="AAG04292.1"/>
    <property type="molecule type" value="Genomic_DNA"/>
</dbReference>
<dbReference type="EMBL" id="AF011922">
    <property type="protein sequence ID" value="AAC46017.1"/>
    <property type="molecule type" value="Genomic_DNA"/>
</dbReference>
<dbReference type="PIR" id="H83533">
    <property type="entry name" value="H83533"/>
</dbReference>
<dbReference type="RefSeq" id="NP_249594.1">
    <property type="nucleotide sequence ID" value="NC_002516.2"/>
</dbReference>
<dbReference type="RefSeq" id="WP_003112602.1">
    <property type="nucleotide sequence ID" value="NZ_QZGE01000007.1"/>
</dbReference>
<dbReference type="SMR" id="Q9I553"/>
<dbReference type="FunCoup" id="Q9I553">
    <property type="interactions" value="754"/>
</dbReference>
<dbReference type="STRING" id="208964.PA0903"/>
<dbReference type="PaxDb" id="208964-PA0903"/>
<dbReference type="GeneID" id="878299"/>
<dbReference type="KEGG" id="pae:PA0903"/>
<dbReference type="PATRIC" id="fig|208964.12.peg.938"/>
<dbReference type="PseudoCAP" id="PA0903"/>
<dbReference type="HOGENOM" id="CLU_004485_1_1_6"/>
<dbReference type="InParanoid" id="Q9I553"/>
<dbReference type="OrthoDB" id="9803884at2"/>
<dbReference type="PhylomeDB" id="Q9I553"/>
<dbReference type="BioCyc" id="PAER208964:G1FZ6-919-MONOMER"/>
<dbReference type="Proteomes" id="UP000002438">
    <property type="component" value="Chromosome"/>
</dbReference>
<dbReference type="GO" id="GO:0005829">
    <property type="term" value="C:cytosol"/>
    <property type="evidence" value="ECO:0000318"/>
    <property type="project" value="GO_Central"/>
</dbReference>
<dbReference type="GO" id="GO:0004813">
    <property type="term" value="F:alanine-tRNA ligase activity"/>
    <property type="evidence" value="ECO:0000318"/>
    <property type="project" value="GO_Central"/>
</dbReference>
<dbReference type="GO" id="GO:0002161">
    <property type="term" value="F:aminoacyl-tRNA deacylase activity"/>
    <property type="evidence" value="ECO:0000318"/>
    <property type="project" value="GO_Central"/>
</dbReference>
<dbReference type="GO" id="GO:0005524">
    <property type="term" value="F:ATP binding"/>
    <property type="evidence" value="ECO:0007669"/>
    <property type="project" value="UniProtKB-UniRule"/>
</dbReference>
<dbReference type="GO" id="GO:0000049">
    <property type="term" value="F:tRNA binding"/>
    <property type="evidence" value="ECO:0007669"/>
    <property type="project" value="UniProtKB-KW"/>
</dbReference>
<dbReference type="GO" id="GO:0008270">
    <property type="term" value="F:zinc ion binding"/>
    <property type="evidence" value="ECO:0007669"/>
    <property type="project" value="UniProtKB-UniRule"/>
</dbReference>
<dbReference type="GO" id="GO:0006419">
    <property type="term" value="P:alanyl-tRNA aminoacylation"/>
    <property type="evidence" value="ECO:0000318"/>
    <property type="project" value="GO_Central"/>
</dbReference>
<dbReference type="GO" id="GO:0045892">
    <property type="term" value="P:negative regulation of DNA-templated transcription"/>
    <property type="evidence" value="ECO:0000318"/>
    <property type="project" value="GO_Central"/>
</dbReference>
<dbReference type="CDD" id="cd00673">
    <property type="entry name" value="AlaRS_core"/>
    <property type="match status" value="1"/>
</dbReference>
<dbReference type="FunFam" id="2.40.30.130:FF:000001">
    <property type="entry name" value="Alanine--tRNA ligase"/>
    <property type="match status" value="1"/>
</dbReference>
<dbReference type="FunFam" id="3.10.310.40:FF:000001">
    <property type="entry name" value="Alanine--tRNA ligase"/>
    <property type="match status" value="1"/>
</dbReference>
<dbReference type="FunFam" id="3.30.54.20:FF:000001">
    <property type="entry name" value="Alanine--tRNA ligase"/>
    <property type="match status" value="1"/>
</dbReference>
<dbReference type="FunFam" id="3.30.930.10:FF:000004">
    <property type="entry name" value="Alanine--tRNA ligase"/>
    <property type="match status" value="1"/>
</dbReference>
<dbReference type="FunFam" id="3.30.980.10:FF:000004">
    <property type="entry name" value="Alanine--tRNA ligase, cytoplasmic"/>
    <property type="match status" value="1"/>
</dbReference>
<dbReference type="Gene3D" id="2.40.30.130">
    <property type="match status" value="1"/>
</dbReference>
<dbReference type="Gene3D" id="3.10.310.40">
    <property type="match status" value="1"/>
</dbReference>
<dbReference type="Gene3D" id="3.30.54.20">
    <property type="match status" value="1"/>
</dbReference>
<dbReference type="Gene3D" id="6.10.250.550">
    <property type="match status" value="1"/>
</dbReference>
<dbReference type="Gene3D" id="3.30.930.10">
    <property type="entry name" value="Bira Bifunctional Protein, Domain 2"/>
    <property type="match status" value="1"/>
</dbReference>
<dbReference type="Gene3D" id="3.30.980.10">
    <property type="entry name" value="Threonyl-trna Synthetase, Chain A, domain 2"/>
    <property type="match status" value="1"/>
</dbReference>
<dbReference type="HAMAP" id="MF_00036_B">
    <property type="entry name" value="Ala_tRNA_synth_B"/>
    <property type="match status" value="1"/>
</dbReference>
<dbReference type="InterPro" id="IPR045864">
    <property type="entry name" value="aa-tRNA-synth_II/BPL/LPL"/>
</dbReference>
<dbReference type="InterPro" id="IPR002318">
    <property type="entry name" value="Ala-tRNA-lgiase_IIc"/>
</dbReference>
<dbReference type="InterPro" id="IPR018162">
    <property type="entry name" value="Ala-tRNA-ligase_IIc_anticod-bd"/>
</dbReference>
<dbReference type="InterPro" id="IPR018165">
    <property type="entry name" value="Ala-tRNA-synth_IIc_core"/>
</dbReference>
<dbReference type="InterPro" id="IPR018164">
    <property type="entry name" value="Ala-tRNA-synth_IIc_N"/>
</dbReference>
<dbReference type="InterPro" id="IPR050058">
    <property type="entry name" value="Ala-tRNA_ligase"/>
</dbReference>
<dbReference type="InterPro" id="IPR023033">
    <property type="entry name" value="Ala_tRNA_ligase_euk/bac"/>
</dbReference>
<dbReference type="InterPro" id="IPR003156">
    <property type="entry name" value="DHHA1_dom"/>
</dbReference>
<dbReference type="InterPro" id="IPR018163">
    <property type="entry name" value="Thr/Ala-tRNA-synth_IIc_edit"/>
</dbReference>
<dbReference type="InterPro" id="IPR009000">
    <property type="entry name" value="Transl_B-barrel_sf"/>
</dbReference>
<dbReference type="InterPro" id="IPR012947">
    <property type="entry name" value="tRNA_SAD"/>
</dbReference>
<dbReference type="NCBIfam" id="TIGR00344">
    <property type="entry name" value="alaS"/>
    <property type="match status" value="1"/>
</dbReference>
<dbReference type="PANTHER" id="PTHR11777:SF9">
    <property type="entry name" value="ALANINE--TRNA LIGASE, CYTOPLASMIC"/>
    <property type="match status" value="1"/>
</dbReference>
<dbReference type="PANTHER" id="PTHR11777">
    <property type="entry name" value="ALANYL-TRNA SYNTHETASE"/>
    <property type="match status" value="1"/>
</dbReference>
<dbReference type="Pfam" id="PF02272">
    <property type="entry name" value="DHHA1"/>
    <property type="match status" value="1"/>
</dbReference>
<dbReference type="Pfam" id="PF01411">
    <property type="entry name" value="tRNA-synt_2c"/>
    <property type="match status" value="1"/>
</dbReference>
<dbReference type="Pfam" id="PF07973">
    <property type="entry name" value="tRNA_SAD"/>
    <property type="match status" value="1"/>
</dbReference>
<dbReference type="PRINTS" id="PR00980">
    <property type="entry name" value="TRNASYNTHALA"/>
</dbReference>
<dbReference type="SMART" id="SM00863">
    <property type="entry name" value="tRNA_SAD"/>
    <property type="match status" value="1"/>
</dbReference>
<dbReference type="SUPFAM" id="SSF55681">
    <property type="entry name" value="Class II aaRS and biotin synthetases"/>
    <property type="match status" value="1"/>
</dbReference>
<dbReference type="SUPFAM" id="SSF101353">
    <property type="entry name" value="Putative anticodon-binding domain of alanyl-tRNA synthetase (AlaRS)"/>
    <property type="match status" value="1"/>
</dbReference>
<dbReference type="SUPFAM" id="SSF55186">
    <property type="entry name" value="ThrRS/AlaRS common domain"/>
    <property type="match status" value="1"/>
</dbReference>
<dbReference type="SUPFAM" id="SSF50447">
    <property type="entry name" value="Translation proteins"/>
    <property type="match status" value="1"/>
</dbReference>
<dbReference type="PROSITE" id="PS50860">
    <property type="entry name" value="AA_TRNA_LIGASE_II_ALA"/>
    <property type="match status" value="1"/>
</dbReference>
<keyword id="KW-0030">Aminoacyl-tRNA synthetase</keyword>
<keyword id="KW-0067">ATP-binding</keyword>
<keyword id="KW-0963">Cytoplasm</keyword>
<keyword id="KW-0436">Ligase</keyword>
<keyword id="KW-0479">Metal-binding</keyword>
<keyword id="KW-0547">Nucleotide-binding</keyword>
<keyword id="KW-0648">Protein biosynthesis</keyword>
<keyword id="KW-1185">Reference proteome</keyword>
<keyword id="KW-0694">RNA-binding</keyword>
<keyword id="KW-0820">tRNA-binding</keyword>
<keyword id="KW-0862">Zinc</keyword>